<evidence type="ECO:0000255" key="1"/>
<evidence type="ECO:0000256" key="2">
    <source>
        <dbReference type="SAM" id="MobiDB-lite"/>
    </source>
</evidence>
<evidence type="ECO:0000305" key="3"/>
<organism>
    <name type="scientific">Bos taurus</name>
    <name type="common">Bovine</name>
    <dbReference type="NCBI Taxonomy" id="9913"/>
    <lineage>
        <taxon>Eukaryota</taxon>
        <taxon>Metazoa</taxon>
        <taxon>Chordata</taxon>
        <taxon>Craniata</taxon>
        <taxon>Vertebrata</taxon>
        <taxon>Euteleostomi</taxon>
        <taxon>Mammalia</taxon>
        <taxon>Eutheria</taxon>
        <taxon>Laurasiatheria</taxon>
        <taxon>Artiodactyla</taxon>
        <taxon>Ruminantia</taxon>
        <taxon>Pecora</taxon>
        <taxon>Bovidae</taxon>
        <taxon>Bovinae</taxon>
        <taxon>Bos</taxon>
    </lineage>
</organism>
<dbReference type="EMBL" id="BC102511">
    <property type="protein sequence ID" value="AAI02512.1"/>
    <property type="molecule type" value="mRNA"/>
</dbReference>
<dbReference type="RefSeq" id="NP_001029536.1">
    <property type="nucleotide sequence ID" value="NM_001034364.2"/>
</dbReference>
<dbReference type="SMR" id="Q3ZCD2"/>
<dbReference type="FunCoup" id="Q3ZCD2">
    <property type="interactions" value="27"/>
</dbReference>
<dbReference type="STRING" id="9913.ENSBTAP00000037867"/>
<dbReference type="PaxDb" id="9913-ENSBTAP00000037867"/>
<dbReference type="GeneID" id="509773"/>
<dbReference type="KEGG" id="bta:509773"/>
<dbReference type="CTD" id="113452"/>
<dbReference type="VEuPathDB" id="HostDB:ENSBTAG00000008331"/>
<dbReference type="eggNOG" id="ENOG502S0UN">
    <property type="taxonomic scope" value="Eukaryota"/>
</dbReference>
<dbReference type="HOGENOM" id="CLU_089663_1_0_1"/>
<dbReference type="InParanoid" id="Q3ZCD2"/>
<dbReference type="OMA" id="YVAGPHD"/>
<dbReference type="OrthoDB" id="9389418at2759"/>
<dbReference type="TreeFam" id="TF332771"/>
<dbReference type="Proteomes" id="UP000009136">
    <property type="component" value="Chromosome 2"/>
</dbReference>
<dbReference type="Bgee" id="ENSBTAG00000008331">
    <property type="expression patterns" value="Expressed in esophagus and 81 other cell types or tissues"/>
</dbReference>
<dbReference type="GO" id="GO:0016020">
    <property type="term" value="C:membrane"/>
    <property type="evidence" value="ECO:0007669"/>
    <property type="project" value="UniProtKB-SubCell"/>
</dbReference>
<dbReference type="InterPro" id="IPR020977">
    <property type="entry name" value="Beta-casein-like"/>
</dbReference>
<dbReference type="PANTHER" id="PTHR31258">
    <property type="entry name" value="KERATINOCYTE-ASSOCIATED PROTEIN 3"/>
    <property type="match status" value="1"/>
</dbReference>
<dbReference type="PANTHER" id="PTHR31258:SF2">
    <property type="entry name" value="TRANSMEMBRANE PROTEIN 54"/>
    <property type="match status" value="1"/>
</dbReference>
<dbReference type="Pfam" id="PF12304">
    <property type="entry name" value="BCLP"/>
    <property type="match status" value="1"/>
</dbReference>
<feature type="chain" id="PRO_0000226988" description="Transmembrane protein 54">
    <location>
        <begin position="1"/>
        <end position="222"/>
    </location>
</feature>
<feature type="transmembrane region" description="Helical" evidence="1">
    <location>
        <begin position="22"/>
        <end position="42"/>
    </location>
</feature>
<feature type="transmembrane region" description="Helical" evidence="1">
    <location>
        <begin position="62"/>
        <end position="82"/>
    </location>
</feature>
<feature type="transmembrane region" description="Helical" evidence="1">
    <location>
        <begin position="100"/>
        <end position="120"/>
    </location>
</feature>
<feature type="transmembrane region" description="Helical" evidence="1">
    <location>
        <begin position="155"/>
        <end position="175"/>
    </location>
</feature>
<feature type="region of interest" description="Disordered" evidence="2">
    <location>
        <begin position="198"/>
        <end position="222"/>
    </location>
</feature>
<feature type="compositionally biased region" description="Polar residues" evidence="2">
    <location>
        <begin position="213"/>
        <end position="222"/>
    </location>
</feature>
<comment type="subcellular location">
    <subcellularLocation>
        <location evidence="3">Membrane</location>
        <topology evidence="3">Multi-pass membrane protein</topology>
    </subcellularLocation>
</comment>
<comment type="similarity">
    <text evidence="3">Belongs to the TMEM54 family.</text>
</comment>
<protein>
    <recommendedName>
        <fullName>Transmembrane protein 54</fullName>
    </recommendedName>
</protein>
<proteinExistence type="evidence at transcript level"/>
<gene>
    <name type="primary">TMEM54</name>
</gene>
<sequence>MCLRLGGLSVGDFRKVLMKTGLVLVVLGHVSFIAAALLHGTVLRYVAAPNDAVALQYCVVDILSVTSAIVVITSGISVIVLSRYLPSIPLRWTVFSSSVACALLSLTCALGLLASIAMTFATQGRALLAACTFGGPERLALAPDCPFDPTRIYSSSLCLWGISLLFCVAESVFAVRSAQLAYQVLELRPWLGKSSHRMMQESPEPVEDPDLPSRTSSGPMTL</sequence>
<accession>Q3ZCD2</accession>
<name>TMM54_BOVIN</name>
<reference key="1">
    <citation type="submission" date="2005-08" db="EMBL/GenBank/DDBJ databases">
        <authorList>
            <consortium name="NIH - Mammalian Gene Collection (MGC) project"/>
        </authorList>
    </citation>
    <scope>NUCLEOTIDE SEQUENCE [LARGE SCALE MRNA]</scope>
    <source>
        <strain>Crossbred X Angus</strain>
        <tissue>Ileum</tissue>
    </source>
</reference>
<keyword id="KW-0472">Membrane</keyword>
<keyword id="KW-1185">Reference proteome</keyword>
<keyword id="KW-0812">Transmembrane</keyword>
<keyword id="KW-1133">Transmembrane helix</keyword>